<protein>
    <recommendedName>
        <fullName>Putative acyl carrier protein phosphodiesterase</fullName>
        <shortName>ACP phosphodiesterase</shortName>
        <ecNumber>3.1.4.14</ecNumber>
    </recommendedName>
</protein>
<keyword id="KW-0275">Fatty acid biosynthesis</keyword>
<keyword id="KW-0276">Fatty acid metabolism</keyword>
<keyword id="KW-0378">Hydrolase</keyword>
<keyword id="KW-0444">Lipid biosynthesis</keyword>
<keyword id="KW-0443">Lipid metabolism</keyword>
<keyword id="KW-1185">Reference proteome</keyword>
<organism>
    <name type="scientific">Shigella flexneri</name>
    <dbReference type="NCBI Taxonomy" id="623"/>
    <lineage>
        <taxon>Bacteria</taxon>
        <taxon>Pseudomonadati</taxon>
        <taxon>Pseudomonadota</taxon>
        <taxon>Gammaproteobacteria</taxon>
        <taxon>Enterobacterales</taxon>
        <taxon>Enterobacteriaceae</taxon>
        <taxon>Shigella</taxon>
    </lineage>
</organism>
<name>ACPH_SHIFL</name>
<feature type="chain" id="PRO_0000226276" description="Putative acyl carrier protein phosphodiesterase">
    <location>
        <begin position="1"/>
        <end position="143"/>
    </location>
</feature>
<dbReference type="EC" id="3.1.4.14"/>
<dbReference type="EMBL" id="AE005674">
    <property type="protein sequence ID" value="AAN41999.1"/>
    <property type="molecule type" value="Genomic_DNA"/>
</dbReference>
<dbReference type="EMBL" id="AE014073">
    <property type="status" value="NOT_ANNOTATED_CDS"/>
    <property type="molecule type" value="Genomic_DNA"/>
</dbReference>
<dbReference type="SMR" id="Q83SG7"/>
<dbReference type="STRING" id="198214.SF0341"/>
<dbReference type="PaxDb" id="198214-SF0341"/>
<dbReference type="PATRIC" id="fig|623.156.peg.3490"/>
<dbReference type="HOGENOM" id="CLU_099370_1_0_6"/>
<dbReference type="Proteomes" id="UP000001006">
    <property type="component" value="Chromosome"/>
</dbReference>
<dbReference type="Proteomes" id="UP000002673">
    <property type="component" value="Chromosome"/>
</dbReference>
<dbReference type="GO" id="GO:0008770">
    <property type="term" value="F:[acyl-carrier-protein] phosphodiesterase activity"/>
    <property type="evidence" value="ECO:0007669"/>
    <property type="project" value="UniProtKB-EC"/>
</dbReference>
<dbReference type="GO" id="GO:0006633">
    <property type="term" value="P:fatty acid biosynthetic process"/>
    <property type="evidence" value="ECO:0007669"/>
    <property type="project" value="UniProtKB-KW"/>
</dbReference>
<dbReference type="InterPro" id="IPR007431">
    <property type="entry name" value="ACP_PD"/>
</dbReference>
<dbReference type="PANTHER" id="PTHR38764">
    <property type="entry name" value="ACYL CARRIER PROTEIN PHOSPHODIESTERASE"/>
    <property type="match status" value="1"/>
</dbReference>
<dbReference type="PANTHER" id="PTHR38764:SF1">
    <property type="entry name" value="ACYL CARRIER PROTEIN PHOSPHODIESTERASE"/>
    <property type="match status" value="1"/>
</dbReference>
<dbReference type="Pfam" id="PF04336">
    <property type="entry name" value="ACP_PD"/>
    <property type="match status" value="1"/>
</dbReference>
<gene>
    <name type="primary">acpH</name>
    <name type="ordered locus">SF0341</name>
    <name type="ordered locus">S0349</name>
</gene>
<accession>Q83SG7</accession>
<proteinExistence type="uncertain"/>
<evidence type="ECO:0000250" key="1"/>
<evidence type="ECO:0000305" key="2"/>
<sequence length="143" mass="17418">MTDNLPEVREAQEWFRSETRRVAPITLDVMWDHFLSRHWSQLSPDFPLQEFVCYAREQVMTILPDSPPRFINLNNYLWSEQWLVRYRDMDFIQNVLNGMASRRPRLDALRDSWYDLDAHYDALETRFWQFYPRMMAQASHKAL</sequence>
<comment type="function">
    <text evidence="1">Converts holo-ACP to apo-ACP by hydrolytic cleavage of the phosphopantetheine prosthetic group from ACP.</text>
</comment>
<comment type="catalytic activity">
    <reaction>
        <text>holo-[ACP] + H2O = apo-[ACP] + (R)-4'-phosphopantetheine + H(+)</text>
        <dbReference type="Rhea" id="RHEA:20537"/>
        <dbReference type="Rhea" id="RHEA-COMP:9685"/>
        <dbReference type="Rhea" id="RHEA-COMP:9690"/>
        <dbReference type="ChEBI" id="CHEBI:15377"/>
        <dbReference type="ChEBI" id="CHEBI:15378"/>
        <dbReference type="ChEBI" id="CHEBI:29999"/>
        <dbReference type="ChEBI" id="CHEBI:61723"/>
        <dbReference type="ChEBI" id="CHEBI:64479"/>
        <dbReference type="EC" id="3.1.4.14"/>
    </reaction>
</comment>
<comment type="similarity">
    <text evidence="2">Belongs to the AcpH family.</text>
</comment>
<comment type="caution">
    <text evidence="2">Could be the product of a pseudogene. The N-terminus is shorter than in related proteins.</text>
</comment>
<reference key="1">
    <citation type="journal article" date="2002" name="Nucleic Acids Res.">
        <title>Genome sequence of Shigella flexneri 2a: insights into pathogenicity through comparison with genomes of Escherichia coli K12 and O157.</title>
        <authorList>
            <person name="Jin Q."/>
            <person name="Yuan Z."/>
            <person name="Xu J."/>
            <person name="Wang Y."/>
            <person name="Shen Y."/>
            <person name="Lu W."/>
            <person name="Wang J."/>
            <person name="Liu H."/>
            <person name="Yang J."/>
            <person name="Yang F."/>
            <person name="Zhang X."/>
            <person name="Zhang J."/>
            <person name="Yang G."/>
            <person name="Wu H."/>
            <person name="Qu D."/>
            <person name="Dong J."/>
            <person name="Sun L."/>
            <person name="Xue Y."/>
            <person name="Zhao A."/>
            <person name="Gao Y."/>
            <person name="Zhu J."/>
            <person name="Kan B."/>
            <person name="Ding K."/>
            <person name="Chen S."/>
            <person name="Cheng H."/>
            <person name="Yao Z."/>
            <person name="He B."/>
            <person name="Chen R."/>
            <person name="Ma D."/>
            <person name="Qiang B."/>
            <person name="Wen Y."/>
            <person name="Hou Y."/>
            <person name="Yu J."/>
        </authorList>
    </citation>
    <scope>NUCLEOTIDE SEQUENCE [LARGE SCALE GENOMIC DNA]</scope>
    <source>
        <strain>301 / Serotype 2a</strain>
    </source>
</reference>
<reference key="2">
    <citation type="journal article" date="2003" name="Infect. Immun.">
        <title>Complete genome sequence and comparative genomics of Shigella flexneri serotype 2a strain 2457T.</title>
        <authorList>
            <person name="Wei J."/>
            <person name="Goldberg M.B."/>
            <person name="Burland V."/>
            <person name="Venkatesan M.M."/>
            <person name="Deng W."/>
            <person name="Fournier G."/>
            <person name="Mayhew G.F."/>
            <person name="Plunkett G. III"/>
            <person name="Rose D.J."/>
            <person name="Darling A."/>
            <person name="Mau B."/>
            <person name="Perna N.T."/>
            <person name="Payne S.M."/>
            <person name="Runyen-Janecky L.J."/>
            <person name="Zhou S."/>
            <person name="Schwartz D.C."/>
            <person name="Blattner F.R."/>
        </authorList>
    </citation>
    <scope>NUCLEOTIDE SEQUENCE [LARGE SCALE GENOMIC DNA]</scope>
    <source>
        <strain>ATCC 700930 / 2457T / Serotype 2a</strain>
    </source>
</reference>